<evidence type="ECO:0000255" key="1">
    <source>
        <dbReference type="HAMAP-Rule" id="MF_01337"/>
    </source>
</evidence>
<evidence type="ECO:0000305" key="2"/>
<protein>
    <recommendedName>
        <fullName evidence="1">Large ribosomal subunit protein uL18</fullName>
    </recommendedName>
    <alternativeName>
        <fullName evidence="2">50S ribosomal protein L18</fullName>
    </alternativeName>
</protein>
<organism>
    <name type="scientific">Leptospira interrogans serogroup Icterohaemorrhagiae serovar Lai (strain 56601)</name>
    <dbReference type="NCBI Taxonomy" id="189518"/>
    <lineage>
        <taxon>Bacteria</taxon>
        <taxon>Pseudomonadati</taxon>
        <taxon>Spirochaetota</taxon>
        <taxon>Spirochaetia</taxon>
        <taxon>Leptospirales</taxon>
        <taxon>Leptospiraceae</taxon>
        <taxon>Leptospira</taxon>
    </lineage>
</organism>
<gene>
    <name evidence="1" type="primary">rplR</name>
    <name type="ordered locus">LA_0755</name>
</gene>
<name>RL18_LEPIN</name>
<keyword id="KW-1185">Reference proteome</keyword>
<keyword id="KW-0687">Ribonucleoprotein</keyword>
<keyword id="KW-0689">Ribosomal protein</keyword>
<keyword id="KW-0694">RNA-binding</keyword>
<keyword id="KW-0699">rRNA-binding</keyword>
<comment type="function">
    <text evidence="1">This is one of the proteins that bind and probably mediate the attachment of the 5S RNA into the large ribosomal subunit, where it forms part of the central protuberance.</text>
</comment>
<comment type="subunit">
    <text evidence="1">Part of the 50S ribosomal subunit; part of the 5S rRNA/L5/L18/L25 subcomplex. Contacts the 5S and 23S rRNAs.</text>
</comment>
<comment type="similarity">
    <text evidence="1">Belongs to the universal ribosomal protein uL18 family.</text>
</comment>
<accession>Q9XD20</accession>
<reference key="1">
    <citation type="journal article" date="2000" name="FEMS Microbiol. Lett.">
        <title>Characterization of the Leptospira interrogans S10-spc-alpha operon.</title>
        <authorList>
            <person name="Zuerner R.L."/>
            <person name="Hartskeerl R.A."/>
            <person name="van de Kemp H."/>
            <person name="Bal A.E."/>
        </authorList>
    </citation>
    <scope>NUCLEOTIDE SEQUENCE [GENOMIC DNA]</scope>
    <source>
        <strain>Lai / Serogroup Icterohaemorrhagiae / Serovar lai</strain>
    </source>
</reference>
<reference key="2">
    <citation type="journal article" date="2003" name="Nature">
        <title>Unique physiological and pathogenic features of Leptospira interrogans revealed by whole-genome sequencing.</title>
        <authorList>
            <person name="Ren S.-X."/>
            <person name="Fu G."/>
            <person name="Jiang X.-G."/>
            <person name="Zeng R."/>
            <person name="Miao Y.-G."/>
            <person name="Xu H."/>
            <person name="Zhang Y.-X."/>
            <person name="Xiong H."/>
            <person name="Lu G."/>
            <person name="Lu L.-F."/>
            <person name="Jiang H.-Q."/>
            <person name="Jia J."/>
            <person name="Tu Y.-F."/>
            <person name="Jiang J.-X."/>
            <person name="Gu W.-Y."/>
            <person name="Zhang Y.-Q."/>
            <person name="Cai Z."/>
            <person name="Sheng H.-H."/>
            <person name="Yin H.-F."/>
            <person name="Zhang Y."/>
            <person name="Zhu G.-F."/>
            <person name="Wan M."/>
            <person name="Huang H.-L."/>
            <person name="Qian Z."/>
            <person name="Wang S.-Y."/>
            <person name="Ma W."/>
            <person name="Yao Z.-J."/>
            <person name="Shen Y."/>
            <person name="Qiang B.-Q."/>
            <person name="Xia Q.-C."/>
            <person name="Guo X.-K."/>
            <person name="Danchin A."/>
            <person name="Saint Girons I."/>
            <person name="Somerville R.L."/>
            <person name="Wen Y.-M."/>
            <person name="Shi M.-H."/>
            <person name="Chen Z."/>
            <person name="Xu J.-G."/>
            <person name="Zhao G.-P."/>
        </authorList>
    </citation>
    <scope>NUCLEOTIDE SEQUENCE [LARGE SCALE GENOMIC DNA]</scope>
    <source>
        <strain>56601</strain>
    </source>
</reference>
<proteinExistence type="inferred from homology"/>
<feature type="chain" id="PRO_0000131286" description="Large ribosomal subunit protein uL18">
    <location>
        <begin position="1"/>
        <end position="122"/>
    </location>
</feature>
<dbReference type="EMBL" id="AF115283">
    <property type="protein sequence ID" value="AAD40599.1"/>
    <property type="molecule type" value="Genomic_DNA"/>
</dbReference>
<dbReference type="EMBL" id="AE010300">
    <property type="protein sequence ID" value="AAN47954.1"/>
    <property type="molecule type" value="Genomic_DNA"/>
</dbReference>
<dbReference type="RefSeq" id="NP_710936.1">
    <property type="nucleotide sequence ID" value="NC_004342.2"/>
</dbReference>
<dbReference type="RefSeq" id="WP_000567189.1">
    <property type="nucleotide sequence ID" value="NC_004342.2"/>
</dbReference>
<dbReference type="SMR" id="Q9XD20"/>
<dbReference type="FunCoup" id="Q9XD20">
    <property type="interactions" value="560"/>
</dbReference>
<dbReference type="STRING" id="189518.LA_0755"/>
<dbReference type="PaxDb" id="189518-LA_0755"/>
<dbReference type="EnsemblBacteria" id="AAN47954">
    <property type="protein sequence ID" value="AAN47954"/>
    <property type="gene ID" value="LA_0755"/>
</dbReference>
<dbReference type="GeneID" id="61142731"/>
<dbReference type="KEGG" id="lil:LA_0755"/>
<dbReference type="PATRIC" id="fig|189518.3.peg.761"/>
<dbReference type="HOGENOM" id="CLU_098841_0_1_12"/>
<dbReference type="InParanoid" id="Q9XD20"/>
<dbReference type="OrthoDB" id="9810939at2"/>
<dbReference type="Proteomes" id="UP000001408">
    <property type="component" value="Chromosome I"/>
</dbReference>
<dbReference type="GO" id="GO:0022625">
    <property type="term" value="C:cytosolic large ribosomal subunit"/>
    <property type="evidence" value="ECO:0000318"/>
    <property type="project" value="GO_Central"/>
</dbReference>
<dbReference type="GO" id="GO:0008097">
    <property type="term" value="F:5S rRNA binding"/>
    <property type="evidence" value="ECO:0000318"/>
    <property type="project" value="GO_Central"/>
</dbReference>
<dbReference type="GO" id="GO:0003735">
    <property type="term" value="F:structural constituent of ribosome"/>
    <property type="evidence" value="ECO:0007669"/>
    <property type="project" value="InterPro"/>
</dbReference>
<dbReference type="GO" id="GO:0006412">
    <property type="term" value="P:translation"/>
    <property type="evidence" value="ECO:0007669"/>
    <property type="project" value="UniProtKB-UniRule"/>
</dbReference>
<dbReference type="CDD" id="cd00432">
    <property type="entry name" value="Ribosomal_L18_L5e"/>
    <property type="match status" value="1"/>
</dbReference>
<dbReference type="FunFam" id="3.30.420.100:FF:000001">
    <property type="entry name" value="50S ribosomal protein L18"/>
    <property type="match status" value="1"/>
</dbReference>
<dbReference type="Gene3D" id="3.30.420.100">
    <property type="match status" value="1"/>
</dbReference>
<dbReference type="HAMAP" id="MF_01337_B">
    <property type="entry name" value="Ribosomal_uL18_B"/>
    <property type="match status" value="1"/>
</dbReference>
<dbReference type="InterPro" id="IPR004389">
    <property type="entry name" value="Ribosomal_uL18_bac-type"/>
</dbReference>
<dbReference type="InterPro" id="IPR005484">
    <property type="entry name" value="Ribosomal_uL18_bac/euk"/>
</dbReference>
<dbReference type="NCBIfam" id="TIGR00060">
    <property type="entry name" value="L18_bact"/>
    <property type="match status" value="1"/>
</dbReference>
<dbReference type="PANTHER" id="PTHR12899">
    <property type="entry name" value="39S RIBOSOMAL PROTEIN L18, MITOCHONDRIAL"/>
    <property type="match status" value="1"/>
</dbReference>
<dbReference type="PANTHER" id="PTHR12899:SF3">
    <property type="entry name" value="LARGE RIBOSOMAL SUBUNIT PROTEIN UL18M"/>
    <property type="match status" value="1"/>
</dbReference>
<dbReference type="Pfam" id="PF00861">
    <property type="entry name" value="Ribosomal_L18p"/>
    <property type="match status" value="1"/>
</dbReference>
<dbReference type="SUPFAM" id="SSF53137">
    <property type="entry name" value="Translational machinery components"/>
    <property type="match status" value="1"/>
</dbReference>
<sequence length="122" mass="13523">MIDRLKKSISKTKRAERSRFKLKKLGSRPRLVFIKSNQYLSCQIIDDIQGVTLAYATTSEKTFTGEGKSKKDKGAAKVLGKLIAERGSQKGVKQVMLDRSGMIFHGRIAAFAEGAREAGLEF</sequence>